<comment type="function">
    <text>Sigma factors are initiation factors that promote the attachment of RNA polymerase to specific initiation sites and are then released. This alternative sigma factor is specific for the flagellin gene (fliC) expression.</text>
</comment>
<comment type="induction">
    <text>Under conditions in which the polar flagellum is not functional.</text>
</comment>
<comment type="similarity">
    <text evidence="2">Belongs to the sigma-70 factor family.</text>
</comment>
<gene>
    <name type="primary">lafS</name>
    <name type="ordered locus">VPA1555</name>
</gene>
<keyword id="KW-0238">DNA-binding</keyword>
<keyword id="KW-0731">Sigma factor</keyword>
<keyword id="KW-0804">Transcription</keyword>
<keyword id="KW-0805">Transcription regulation</keyword>
<proteinExistence type="evidence at transcript level"/>
<reference key="1">
    <citation type="journal article" date="1993" name="J. Bacteriol.">
        <title>Identification of genes encoding components of the swarmer cell flagellar motor and propeller and a sigma factor controlling differentiation of Vibrio parahaemolyticus.</title>
        <authorList>
            <person name="McCarter L.L."/>
            <person name="Wright M.E."/>
        </authorList>
    </citation>
    <scope>NUCLEOTIDE SEQUENCE [GENOMIC DNA]</scope>
    <source>
        <strain>BB22</strain>
    </source>
</reference>
<reference key="2">
    <citation type="journal article" date="2003" name="Lancet">
        <title>Genome sequence of Vibrio parahaemolyticus: a pathogenic mechanism distinct from that of V. cholerae.</title>
        <authorList>
            <person name="Makino K."/>
            <person name="Oshima K."/>
            <person name="Kurokawa K."/>
            <person name="Yokoyama K."/>
            <person name="Uda T."/>
            <person name="Tagomori K."/>
            <person name="Iijima Y."/>
            <person name="Najima M."/>
            <person name="Nakano M."/>
            <person name="Yamashita A."/>
            <person name="Kubota Y."/>
            <person name="Kimura S."/>
            <person name="Yasunaga T."/>
            <person name="Honda T."/>
            <person name="Shinagawa H."/>
            <person name="Hattori M."/>
            <person name="Iida T."/>
        </authorList>
    </citation>
    <scope>NUCLEOTIDE SEQUENCE [LARGE SCALE GENOMIC DNA]</scope>
    <source>
        <strain>RIMD 2210633</strain>
    </source>
</reference>
<organism>
    <name type="scientific">Vibrio parahaemolyticus serotype O3:K6 (strain RIMD 2210633)</name>
    <dbReference type="NCBI Taxonomy" id="223926"/>
    <lineage>
        <taxon>Bacteria</taxon>
        <taxon>Pseudomonadati</taxon>
        <taxon>Pseudomonadota</taxon>
        <taxon>Gammaproteobacteria</taxon>
        <taxon>Vibrionales</taxon>
        <taxon>Vibrionaceae</taxon>
        <taxon>Vibrio</taxon>
    </lineage>
</organism>
<dbReference type="EMBL" id="U20541">
    <property type="protein sequence ID" value="AAA62353.1"/>
    <property type="molecule type" value="Genomic_DNA"/>
</dbReference>
<dbReference type="EMBL" id="U52957">
    <property type="protein sequence ID" value="AAB07356.1"/>
    <property type="molecule type" value="Genomic_DNA"/>
</dbReference>
<dbReference type="EMBL" id="BA000032">
    <property type="protein sequence ID" value="BAC62898.1"/>
    <property type="molecule type" value="Genomic_DNA"/>
</dbReference>
<dbReference type="PIR" id="D40590">
    <property type="entry name" value="D40590"/>
</dbReference>
<dbReference type="RefSeq" id="NP_801065.1">
    <property type="nucleotide sequence ID" value="NC_004605.1"/>
</dbReference>
<dbReference type="RefSeq" id="WP_005462772.1">
    <property type="nucleotide sequence ID" value="NC_004605.1"/>
</dbReference>
<dbReference type="SMR" id="Q03474"/>
<dbReference type="GeneID" id="1192251"/>
<dbReference type="KEGG" id="vpa:VPA1555"/>
<dbReference type="PATRIC" id="fig|223926.6.peg.4477"/>
<dbReference type="eggNOG" id="COG1191">
    <property type="taxonomic scope" value="Bacteria"/>
</dbReference>
<dbReference type="HOGENOM" id="CLU_014793_8_1_6"/>
<dbReference type="Proteomes" id="UP000002493">
    <property type="component" value="Chromosome 2"/>
</dbReference>
<dbReference type="GO" id="GO:0003677">
    <property type="term" value="F:DNA binding"/>
    <property type="evidence" value="ECO:0007669"/>
    <property type="project" value="UniProtKB-KW"/>
</dbReference>
<dbReference type="GO" id="GO:0003899">
    <property type="term" value="F:DNA-directed RNA polymerase activity"/>
    <property type="evidence" value="ECO:0007669"/>
    <property type="project" value="InterPro"/>
</dbReference>
<dbReference type="GO" id="GO:0016987">
    <property type="term" value="F:sigma factor activity"/>
    <property type="evidence" value="ECO:0007669"/>
    <property type="project" value="UniProtKB-KW"/>
</dbReference>
<dbReference type="GO" id="GO:0006352">
    <property type="term" value="P:DNA-templated transcription initiation"/>
    <property type="evidence" value="ECO:0007669"/>
    <property type="project" value="InterPro"/>
</dbReference>
<dbReference type="Gene3D" id="1.10.1740.10">
    <property type="match status" value="1"/>
</dbReference>
<dbReference type="Gene3D" id="1.20.140.160">
    <property type="match status" value="1"/>
</dbReference>
<dbReference type="InterPro" id="IPR014284">
    <property type="entry name" value="RNA_pol_sigma-70_dom"/>
</dbReference>
<dbReference type="InterPro" id="IPR000943">
    <property type="entry name" value="RNA_pol_sigma70"/>
</dbReference>
<dbReference type="InterPro" id="IPR007627">
    <property type="entry name" value="RNA_pol_sigma70_r2"/>
</dbReference>
<dbReference type="InterPro" id="IPR007630">
    <property type="entry name" value="RNA_pol_sigma70_r4"/>
</dbReference>
<dbReference type="InterPro" id="IPR012845">
    <property type="entry name" value="RNA_pol_sigma_FliA_WhiG"/>
</dbReference>
<dbReference type="InterPro" id="IPR013325">
    <property type="entry name" value="RNA_pol_sigma_r2"/>
</dbReference>
<dbReference type="InterPro" id="IPR013324">
    <property type="entry name" value="RNA_pol_sigma_r3/r4-like"/>
</dbReference>
<dbReference type="NCBIfam" id="TIGR02479">
    <property type="entry name" value="FliA_WhiG"/>
    <property type="match status" value="1"/>
</dbReference>
<dbReference type="NCBIfam" id="NF005413">
    <property type="entry name" value="PRK06986.1"/>
    <property type="match status" value="1"/>
</dbReference>
<dbReference type="NCBIfam" id="TIGR02937">
    <property type="entry name" value="sigma70-ECF"/>
    <property type="match status" value="1"/>
</dbReference>
<dbReference type="PANTHER" id="PTHR30385:SF7">
    <property type="entry name" value="RNA POLYMERASE SIGMA FACTOR FLIA"/>
    <property type="match status" value="1"/>
</dbReference>
<dbReference type="PANTHER" id="PTHR30385">
    <property type="entry name" value="SIGMA FACTOR F FLAGELLAR"/>
    <property type="match status" value="1"/>
</dbReference>
<dbReference type="Pfam" id="PF04542">
    <property type="entry name" value="Sigma70_r2"/>
    <property type="match status" value="1"/>
</dbReference>
<dbReference type="Pfam" id="PF04545">
    <property type="entry name" value="Sigma70_r4"/>
    <property type="match status" value="1"/>
</dbReference>
<dbReference type="SUPFAM" id="SSF88946">
    <property type="entry name" value="Sigma2 domain of RNA polymerase sigma factors"/>
    <property type="match status" value="1"/>
</dbReference>
<dbReference type="SUPFAM" id="SSF88659">
    <property type="entry name" value="Sigma3 and sigma4 domains of RNA polymerase sigma factors"/>
    <property type="match status" value="2"/>
</dbReference>
<dbReference type="PROSITE" id="PS00716">
    <property type="entry name" value="SIGMA70_2"/>
    <property type="match status" value="1"/>
</dbReference>
<accession>Q03474</accession>
<protein>
    <recommendedName>
        <fullName>RNA polymerase sigma factor for flagellar operon</fullName>
    </recommendedName>
    <alternativeName>
        <fullName>Sigma-27</fullName>
    </alternativeName>
    <alternativeName>
        <fullName>Sigma-F factor</fullName>
    </alternativeName>
</protein>
<name>LAFS_VIBPA</name>
<sequence>MLDMNPQETYTAPEEVNTPSRPIDENALLQRHQVMVKRVVNQLRVHATSHCSIEDMQQIGLIALVEAGRRYGDIDDTHFPAFAVCRVRGAILDELRRLDWRSRKTRQQAHELNDVTRDLTRSLGRMPTDSEIIKALGTDEQDYYNRQNAALAGEMQSLDQLMENSTDSHFGGQYDGMEHEHIRRSLDSALGRLSKRDQLLLTLFYQHELNLHEIALVLDLTPPRICQLHKQALKQLNQLMSS</sequence>
<evidence type="ECO:0000250" key="1"/>
<evidence type="ECO:0000305" key="2"/>
<feature type="chain" id="PRO_0000093988" description="RNA polymerase sigma factor for flagellar operon">
    <location>
        <begin position="1"/>
        <end position="242"/>
    </location>
</feature>
<feature type="DNA-binding region" description="H-T-H motif" evidence="1">
    <location>
        <begin position="211"/>
        <end position="230"/>
    </location>
</feature>
<feature type="short sequence motif" description="Polymerase core binding">
    <location>
        <begin position="55"/>
        <end position="68"/>
    </location>
</feature>